<name>RLMM_VIBA3</name>
<proteinExistence type="inferred from homology"/>
<organism>
    <name type="scientific">Vibrio atlanticus (strain LGP32)</name>
    <name type="common">Vibrio splendidus (strain Mel32)</name>
    <dbReference type="NCBI Taxonomy" id="575788"/>
    <lineage>
        <taxon>Bacteria</taxon>
        <taxon>Pseudomonadati</taxon>
        <taxon>Pseudomonadota</taxon>
        <taxon>Gammaproteobacteria</taxon>
        <taxon>Vibrionales</taxon>
        <taxon>Vibrionaceae</taxon>
        <taxon>Vibrio</taxon>
    </lineage>
</organism>
<comment type="function">
    <text evidence="1">Catalyzes the 2'-O-methylation at nucleotide C2498 in 23S rRNA.</text>
</comment>
<comment type="catalytic activity">
    <reaction evidence="1">
        <text>cytidine(2498) in 23S rRNA + S-adenosyl-L-methionine = 2'-O-methylcytidine(2498) in 23S rRNA + S-adenosyl-L-homocysteine + H(+)</text>
        <dbReference type="Rhea" id="RHEA:42788"/>
        <dbReference type="Rhea" id="RHEA-COMP:10244"/>
        <dbReference type="Rhea" id="RHEA-COMP:10245"/>
        <dbReference type="ChEBI" id="CHEBI:15378"/>
        <dbReference type="ChEBI" id="CHEBI:57856"/>
        <dbReference type="ChEBI" id="CHEBI:59789"/>
        <dbReference type="ChEBI" id="CHEBI:74495"/>
        <dbReference type="ChEBI" id="CHEBI:82748"/>
        <dbReference type="EC" id="2.1.1.186"/>
    </reaction>
</comment>
<comment type="subunit">
    <text evidence="1">Monomer.</text>
</comment>
<comment type="subcellular location">
    <subcellularLocation>
        <location evidence="1">Cytoplasm</location>
    </subcellularLocation>
</comment>
<comment type="similarity">
    <text evidence="1">Belongs to the class I-like SAM-binding methyltransferase superfamily. RNA methyltransferase RlmE family. RlmM subfamily.</text>
</comment>
<comment type="sequence caution" evidence="2">
    <conflict type="erroneous initiation">
        <sequence resource="EMBL-CDS" id="CAV19556"/>
    </conflict>
</comment>
<dbReference type="EC" id="2.1.1.186" evidence="1"/>
<dbReference type="EMBL" id="FM954972">
    <property type="protein sequence ID" value="CAV19556.1"/>
    <property type="status" value="ALT_INIT"/>
    <property type="molecule type" value="Genomic_DNA"/>
</dbReference>
<dbReference type="SMR" id="B7VJ92"/>
<dbReference type="STRING" id="575788.VS_2396"/>
<dbReference type="KEGG" id="vsp:VS_2396"/>
<dbReference type="PATRIC" id="fig|575788.5.peg.3659"/>
<dbReference type="eggNOG" id="COG2933">
    <property type="taxonomic scope" value="Bacteria"/>
</dbReference>
<dbReference type="HOGENOM" id="CLU_043780_0_0_6"/>
<dbReference type="Proteomes" id="UP000009100">
    <property type="component" value="Chromosome 1"/>
</dbReference>
<dbReference type="GO" id="GO:0005737">
    <property type="term" value="C:cytoplasm"/>
    <property type="evidence" value="ECO:0007669"/>
    <property type="project" value="UniProtKB-SubCell"/>
</dbReference>
<dbReference type="GO" id="GO:0008757">
    <property type="term" value="F:S-adenosylmethionine-dependent methyltransferase activity"/>
    <property type="evidence" value="ECO:0007669"/>
    <property type="project" value="UniProtKB-UniRule"/>
</dbReference>
<dbReference type="GO" id="GO:0032259">
    <property type="term" value="P:methylation"/>
    <property type="evidence" value="ECO:0007669"/>
    <property type="project" value="UniProtKB-KW"/>
</dbReference>
<dbReference type="GO" id="GO:0006364">
    <property type="term" value="P:rRNA processing"/>
    <property type="evidence" value="ECO:0007669"/>
    <property type="project" value="UniProtKB-UniRule"/>
</dbReference>
<dbReference type="Gene3D" id="3.30.2300.20">
    <property type="match status" value="1"/>
</dbReference>
<dbReference type="Gene3D" id="3.30.70.2810">
    <property type="match status" value="1"/>
</dbReference>
<dbReference type="Gene3D" id="3.40.50.150">
    <property type="entry name" value="Vaccinia Virus protein VP39"/>
    <property type="match status" value="1"/>
</dbReference>
<dbReference type="HAMAP" id="MF_01551">
    <property type="entry name" value="23SrRNA_methyltr_M"/>
    <property type="match status" value="1"/>
</dbReference>
<dbReference type="InterPro" id="IPR040739">
    <property type="entry name" value="RlmM_FDX"/>
</dbReference>
<dbReference type="InterPro" id="IPR048646">
    <property type="entry name" value="RlmM_THUMP-like"/>
</dbReference>
<dbReference type="InterPro" id="IPR002877">
    <property type="entry name" value="RNA_MeTrfase_FtsJ_dom"/>
</dbReference>
<dbReference type="InterPro" id="IPR011224">
    <property type="entry name" value="rRNA_MeTrfase_M"/>
</dbReference>
<dbReference type="InterPro" id="IPR029063">
    <property type="entry name" value="SAM-dependent_MTases_sf"/>
</dbReference>
<dbReference type="NCBIfam" id="NF008734">
    <property type="entry name" value="PRK11760.1"/>
    <property type="match status" value="1"/>
</dbReference>
<dbReference type="PANTHER" id="PTHR37524">
    <property type="entry name" value="RIBOSOMAL RNA LARGE SUBUNIT METHYLTRANSFERASE M"/>
    <property type="match status" value="1"/>
</dbReference>
<dbReference type="PANTHER" id="PTHR37524:SF2">
    <property type="entry name" value="RIBOSOMAL RNA METHYLTRANSFERASE FTSJ DOMAIN-CONTAINING PROTEIN"/>
    <property type="match status" value="1"/>
</dbReference>
<dbReference type="Pfam" id="PF01728">
    <property type="entry name" value="FtsJ"/>
    <property type="match status" value="1"/>
</dbReference>
<dbReference type="Pfam" id="PF18125">
    <property type="entry name" value="RlmM_FDX"/>
    <property type="match status" value="1"/>
</dbReference>
<dbReference type="Pfam" id="PF21239">
    <property type="entry name" value="RLMM_N"/>
    <property type="match status" value="1"/>
</dbReference>
<dbReference type="PIRSF" id="PIRSF028774">
    <property type="entry name" value="UCP028774"/>
    <property type="match status" value="1"/>
</dbReference>
<dbReference type="SUPFAM" id="SSF53335">
    <property type="entry name" value="S-adenosyl-L-methionine-dependent methyltransferases"/>
    <property type="match status" value="1"/>
</dbReference>
<protein>
    <recommendedName>
        <fullName evidence="1">Ribosomal RNA large subunit methyltransferase M</fullName>
        <ecNumber evidence="1">2.1.1.186</ecNumber>
    </recommendedName>
    <alternativeName>
        <fullName evidence="1">23S rRNA (cytidine2498-2'-O)-methyltransferase</fullName>
    </alternativeName>
    <alternativeName>
        <fullName evidence="1">23S rRNA 2'-O-ribose methyltransferase RlmM</fullName>
    </alternativeName>
</protein>
<feature type="chain" id="PRO_0000388991" description="Ribosomal RNA large subunit methyltransferase M">
    <location>
        <begin position="1"/>
        <end position="363"/>
    </location>
</feature>
<feature type="active site" description="Proton acceptor" evidence="1">
    <location>
        <position position="308"/>
    </location>
</feature>
<feature type="binding site" evidence="1">
    <location>
        <position position="190"/>
    </location>
    <ligand>
        <name>S-adenosyl-L-methionine</name>
        <dbReference type="ChEBI" id="CHEBI:59789"/>
    </ligand>
</feature>
<feature type="binding site" evidence="1">
    <location>
        <begin position="223"/>
        <end position="226"/>
    </location>
    <ligand>
        <name>S-adenosyl-L-methionine</name>
        <dbReference type="ChEBI" id="CHEBI:59789"/>
    </ligand>
</feature>
<feature type="binding site" evidence="1">
    <location>
        <position position="242"/>
    </location>
    <ligand>
        <name>S-adenosyl-L-methionine</name>
        <dbReference type="ChEBI" id="CHEBI:59789"/>
    </ligand>
</feature>
<feature type="binding site" evidence="1">
    <location>
        <position position="262"/>
    </location>
    <ligand>
        <name>S-adenosyl-L-methionine</name>
        <dbReference type="ChEBI" id="CHEBI:59789"/>
    </ligand>
</feature>
<feature type="binding site" evidence="1">
    <location>
        <position position="279"/>
    </location>
    <ligand>
        <name>S-adenosyl-L-methionine</name>
        <dbReference type="ChEBI" id="CHEBI:59789"/>
    </ligand>
</feature>
<sequence>MKHVLLYCRSGFEKECAGEIQDKATQLEVFGFPRLKNNTGFVLFECYQAGEADKLIKEIDFQSLIFARQMLAVAVEIKDLPTDDRISPILEALSEKEGFPRCGDIRIETPDTNEAKELLKFCRKFTVPMRQAMRGKGLMTAKDNAKKPVLHLCFIAPGHCFVGYSYPTNNSQFFMGIPRLKFPSDAPSRSTLKLEEAFHVFIPRDEWDERLAPGMWGVDLGACPGGWTYQLVKRSMFVHCVDNGMMADSLMETGQIKHHMVDGFKFEPDRKNVTWIICDMVEKPARVAHLMGEWIIKGWAKEALFNLKLPMKGRYDEVLQDIENLKQFLIDNKVKFKMQAKHLYHDREEITVHIQSLSNISPY</sequence>
<evidence type="ECO:0000255" key="1">
    <source>
        <dbReference type="HAMAP-Rule" id="MF_01551"/>
    </source>
</evidence>
<evidence type="ECO:0000305" key="2"/>
<reference key="1">
    <citation type="submission" date="2009-02" db="EMBL/GenBank/DDBJ databases">
        <title>Vibrio splendidus str. LGP32 complete genome.</title>
        <authorList>
            <person name="Mazel D."/>
            <person name="Le Roux F."/>
        </authorList>
    </citation>
    <scope>NUCLEOTIDE SEQUENCE [LARGE SCALE GENOMIC DNA]</scope>
    <source>
        <strain>LGP32</strain>
    </source>
</reference>
<accession>B7VJ92</accession>
<keyword id="KW-0963">Cytoplasm</keyword>
<keyword id="KW-0489">Methyltransferase</keyword>
<keyword id="KW-0698">rRNA processing</keyword>
<keyword id="KW-0949">S-adenosyl-L-methionine</keyword>
<keyword id="KW-0808">Transferase</keyword>
<gene>
    <name evidence="1" type="primary">rlmM</name>
    <name type="ordered locus">VS_2396</name>
</gene>